<dbReference type="EMBL" id="CH476601">
    <property type="protein sequence ID" value="EAU33957.1"/>
    <property type="status" value="ALT_SEQ"/>
    <property type="molecule type" value="Genomic_DNA"/>
</dbReference>
<dbReference type="RefSeq" id="XP_001215374.1">
    <property type="nucleotide sequence ID" value="XM_001215374.1"/>
</dbReference>
<dbReference type="SMR" id="Q0CJD8"/>
<dbReference type="STRING" id="341663.Q0CJD8"/>
<dbReference type="EnsemblFungi" id="EAU33957">
    <property type="protein sequence ID" value="EAU33957"/>
    <property type="gene ID" value="ATEG_06196"/>
</dbReference>
<dbReference type="GeneID" id="4321622"/>
<dbReference type="eggNOG" id="KOG4155">
    <property type="taxonomic scope" value="Eukaryota"/>
</dbReference>
<dbReference type="OrthoDB" id="496at2759"/>
<dbReference type="Proteomes" id="UP000007963">
    <property type="component" value="Unassembled WGS sequence"/>
</dbReference>
<dbReference type="GO" id="GO:0005741">
    <property type="term" value="C:mitochondrial outer membrane"/>
    <property type="evidence" value="ECO:0007669"/>
    <property type="project" value="UniProtKB-SubCell"/>
</dbReference>
<dbReference type="GO" id="GO:1990234">
    <property type="term" value="C:transferase complex"/>
    <property type="evidence" value="ECO:0007669"/>
    <property type="project" value="UniProtKB-ARBA"/>
</dbReference>
<dbReference type="CDD" id="cd22881">
    <property type="entry name" value="Mdv1_N"/>
    <property type="match status" value="1"/>
</dbReference>
<dbReference type="CDD" id="cd00200">
    <property type="entry name" value="WD40"/>
    <property type="match status" value="1"/>
</dbReference>
<dbReference type="FunFam" id="2.130.10.10:FF:000404">
    <property type="entry name" value="Mitochondrial division protein 1"/>
    <property type="match status" value="1"/>
</dbReference>
<dbReference type="FunFam" id="2.130.10.10:FF:000881">
    <property type="entry name" value="Mitochondrial division protein 1"/>
    <property type="match status" value="1"/>
</dbReference>
<dbReference type="Gene3D" id="6.10.280.220">
    <property type="match status" value="1"/>
</dbReference>
<dbReference type="Gene3D" id="2.130.10.10">
    <property type="entry name" value="YVTN repeat-like/Quinoprotein amine dehydrogenase"/>
    <property type="match status" value="2"/>
</dbReference>
<dbReference type="InterPro" id="IPR020472">
    <property type="entry name" value="G-protein_beta_WD-40_rep"/>
</dbReference>
<dbReference type="InterPro" id="IPR015943">
    <property type="entry name" value="WD40/YVTN_repeat-like_dom_sf"/>
</dbReference>
<dbReference type="InterPro" id="IPR019775">
    <property type="entry name" value="WD40_repeat_CS"/>
</dbReference>
<dbReference type="InterPro" id="IPR036322">
    <property type="entry name" value="WD40_repeat_dom_sf"/>
</dbReference>
<dbReference type="InterPro" id="IPR001680">
    <property type="entry name" value="WD40_rpt"/>
</dbReference>
<dbReference type="PANTHER" id="PTHR22847:SF637">
    <property type="entry name" value="WD REPEAT DOMAIN 5B"/>
    <property type="match status" value="1"/>
</dbReference>
<dbReference type="PANTHER" id="PTHR22847">
    <property type="entry name" value="WD40 REPEAT PROTEIN"/>
    <property type="match status" value="1"/>
</dbReference>
<dbReference type="Pfam" id="PF00400">
    <property type="entry name" value="WD40"/>
    <property type="match status" value="4"/>
</dbReference>
<dbReference type="PRINTS" id="PR00320">
    <property type="entry name" value="GPROTEINBRPT"/>
</dbReference>
<dbReference type="SMART" id="SM00320">
    <property type="entry name" value="WD40"/>
    <property type="match status" value="6"/>
</dbReference>
<dbReference type="SUPFAM" id="SSF50978">
    <property type="entry name" value="WD40 repeat-like"/>
    <property type="match status" value="1"/>
</dbReference>
<dbReference type="PROSITE" id="PS00678">
    <property type="entry name" value="WD_REPEATS_1"/>
    <property type="match status" value="3"/>
</dbReference>
<dbReference type="PROSITE" id="PS50082">
    <property type="entry name" value="WD_REPEATS_2"/>
    <property type="match status" value="5"/>
</dbReference>
<dbReference type="PROSITE" id="PS50294">
    <property type="entry name" value="WD_REPEATS_REGION"/>
    <property type="match status" value="1"/>
</dbReference>
<reference key="1">
    <citation type="submission" date="2005-09" db="EMBL/GenBank/DDBJ databases">
        <title>Annotation of the Aspergillus terreus NIH2624 genome.</title>
        <authorList>
            <person name="Birren B.W."/>
            <person name="Lander E.S."/>
            <person name="Galagan J.E."/>
            <person name="Nusbaum C."/>
            <person name="Devon K."/>
            <person name="Henn M."/>
            <person name="Ma L.-J."/>
            <person name="Jaffe D.B."/>
            <person name="Butler J."/>
            <person name="Alvarez P."/>
            <person name="Gnerre S."/>
            <person name="Grabherr M."/>
            <person name="Kleber M."/>
            <person name="Mauceli E.W."/>
            <person name="Brockman W."/>
            <person name="Rounsley S."/>
            <person name="Young S.K."/>
            <person name="LaButti K."/>
            <person name="Pushparaj V."/>
            <person name="DeCaprio D."/>
            <person name="Crawford M."/>
            <person name="Koehrsen M."/>
            <person name="Engels R."/>
            <person name="Montgomery P."/>
            <person name="Pearson M."/>
            <person name="Howarth C."/>
            <person name="Larson L."/>
            <person name="Luoma S."/>
            <person name="White J."/>
            <person name="Alvarado L."/>
            <person name="Kodira C.D."/>
            <person name="Zeng Q."/>
            <person name="Oleary S."/>
            <person name="Yandava C."/>
            <person name="Denning D.W."/>
            <person name="Nierman W.C."/>
            <person name="Milne T."/>
            <person name="Madden K."/>
        </authorList>
    </citation>
    <scope>NUCLEOTIDE SEQUENCE [LARGE SCALE GENOMIC DNA]</scope>
    <source>
        <strain>NIH 2624 / FGSC A1156</strain>
    </source>
</reference>
<organism>
    <name type="scientific">Aspergillus terreus (strain NIH 2624 / FGSC A1156)</name>
    <dbReference type="NCBI Taxonomy" id="341663"/>
    <lineage>
        <taxon>Eukaryota</taxon>
        <taxon>Fungi</taxon>
        <taxon>Dikarya</taxon>
        <taxon>Ascomycota</taxon>
        <taxon>Pezizomycotina</taxon>
        <taxon>Eurotiomycetes</taxon>
        <taxon>Eurotiomycetidae</taxon>
        <taxon>Eurotiales</taxon>
        <taxon>Aspergillaceae</taxon>
        <taxon>Aspergillus</taxon>
        <taxon>Aspergillus subgen. Circumdati</taxon>
    </lineage>
</organism>
<accession>Q0CJD8</accession>
<feature type="chain" id="PRO_0000330100" description="Mitochondrial division protein 1">
    <location>
        <begin position="1"/>
        <end position="654"/>
    </location>
</feature>
<feature type="repeat" description="WD 1">
    <location>
        <begin position="318"/>
        <end position="359"/>
    </location>
</feature>
<feature type="repeat" description="WD 2">
    <location>
        <begin position="360"/>
        <end position="397"/>
    </location>
</feature>
<feature type="repeat" description="WD 3">
    <location>
        <begin position="433"/>
        <end position="472"/>
    </location>
</feature>
<feature type="repeat" description="WD 4">
    <location>
        <begin position="478"/>
        <end position="535"/>
    </location>
</feature>
<feature type="repeat" description="WD 5">
    <location>
        <begin position="538"/>
        <end position="577"/>
    </location>
</feature>
<feature type="repeat" description="WD 6">
    <location>
        <begin position="579"/>
        <end position="614"/>
    </location>
</feature>
<feature type="repeat" description="WD 7">
    <location>
        <begin position="625"/>
        <end position="654"/>
    </location>
</feature>
<feature type="region of interest" description="Disordered" evidence="3">
    <location>
        <begin position="1"/>
        <end position="20"/>
    </location>
</feature>
<feature type="region of interest" description="Disordered" evidence="3">
    <location>
        <begin position="240"/>
        <end position="264"/>
    </location>
</feature>
<feature type="coiled-coil region" evidence="2">
    <location>
        <begin position="209"/>
        <end position="253"/>
    </location>
</feature>
<keyword id="KW-0175">Coiled coil</keyword>
<keyword id="KW-0472">Membrane</keyword>
<keyword id="KW-0496">Mitochondrion</keyword>
<keyword id="KW-1000">Mitochondrion outer membrane</keyword>
<keyword id="KW-1185">Reference proteome</keyword>
<keyword id="KW-0677">Repeat</keyword>
<keyword id="KW-0853">WD repeat</keyword>
<name>MDV1_ASPTN</name>
<protein>
    <recommendedName>
        <fullName>Mitochondrial division protein 1</fullName>
    </recommendedName>
</protein>
<gene>
    <name type="primary">mdv1</name>
    <name type="ORF">ATEG_06196</name>
</gene>
<sequence>MDKHRRDESPSGLSDIVEPDGLLGTGLTSRHIEAFGRKVTTTAGHLMAPSSTEATTGSHYHSAMVDIQRELRRPNTQRRVFSLTQTTPTDLVRSKLSTTEIQSRAISSLPDDLLANIPEDSSSYSLFEGFQASQDDHEYRKVHRRRISKGKKLLKDGDARAALPSTPTDLKKDRDILSRRLDLMGVRKNMCSSEIHEIDNKIANLHNMRKIVLDRLAGLEMEEAELEHELTELDNKLEDLQEEQPESQAAVATPKSSEANEDSFVSEDPAMDASFMSESIYQKMSSPKSIKQRSIRKRSMPILHEHFAPGSQIKEMPAHNDMVTAIDFDFPFGTMVSAALDDTVRVWDLNVGRCTGLLEGHNASVRCLQIEDNIVATGSMDASVKLWDLSRARSVTRDGRVNKDDEGEDTADDAHELFQSTTLEDCYVYSLDAHVDEVTALHFRGDTLISGSADKTLRQWDLVKGRCVQTLDVLWAAAQASTLGGDTQWRPSGRLPDASADFVGALQCFDAALACGTADGMVRLWDLRSGQVHRSLVGHTGPVTCLQFDDVHLVTGSLDRSIRIWDLRTGSIYDAYAYDKPVTSMMFDSKRIVAAAGENVVKVYDKADGHHWDCGAGVGADAEGPSPATVERVRLKDGFLVEGRKDGIVSAWTC</sequence>
<evidence type="ECO:0000250" key="1"/>
<evidence type="ECO:0000255" key="2"/>
<evidence type="ECO:0000256" key="3">
    <source>
        <dbReference type="SAM" id="MobiDB-lite"/>
    </source>
</evidence>
<evidence type="ECO:0000305" key="4"/>
<proteinExistence type="inferred from homology"/>
<comment type="function">
    <text evidence="1">Involved in mitochondrial fission. Acts as an adapter protein required to form mitochondrial fission complexes. Formation of these complexes is required to promote constriction and fission of the mitochondrial compartment at a late step in mitochondrial division (By similarity).</text>
</comment>
<comment type="subcellular location">
    <subcellularLocation>
        <location evidence="1">Mitochondrion outer membrane</location>
        <topology evidence="1">Peripheral membrane protein</topology>
        <orientation evidence="1">Cytoplasmic side</orientation>
    </subcellularLocation>
</comment>
<comment type="similarity">
    <text evidence="4">Belongs to the WD repeat MDV1/CAF4 family.</text>
</comment>
<comment type="sequence caution" evidence="4">
    <conflict type="erroneous gene model prediction">
        <sequence resource="EMBL-CDS" id="EAU33957"/>
    </conflict>
</comment>